<protein>
    <recommendedName>
        <fullName>Tetrahydromethanopterin S-methyltransferase subunit E</fullName>
        <ecNumber>7.2.1.4</ecNumber>
    </recommendedName>
    <alternativeName>
        <fullName>N5-methyltetrahydromethanopterin--coenzyme M methyltransferase subunit E</fullName>
    </alternativeName>
</protein>
<accession>Q50830</accession>
<reference key="1">
    <citation type="submission" date="1996-06" db="EMBL/GenBank/DDBJ databases">
        <authorList>
            <person name="Noelling J."/>
            <person name="Elfner A."/>
            <person name="Palmer J.R."/>
            <person name="Steigerwald V.J."/>
            <person name="Pihl T.D."/>
            <person name="Lake J.A."/>
            <person name="Reeve J.N."/>
        </authorList>
    </citation>
    <scope>NUCLEOTIDE SEQUENCE [GENOMIC DNA]</scope>
</reference>
<keyword id="KW-1003">Cell membrane</keyword>
<keyword id="KW-0472">Membrane</keyword>
<keyword id="KW-0484">Methanogenesis</keyword>
<keyword id="KW-0489">Methyltransferase</keyword>
<keyword id="KW-0554">One-carbon metabolism</keyword>
<keyword id="KW-0808">Transferase</keyword>
<keyword id="KW-1278">Translocase</keyword>
<keyword id="KW-0812">Transmembrane</keyword>
<keyword id="KW-1133">Transmembrane helix</keyword>
<name>MTRE_METVA</name>
<organism>
    <name type="scientific">Methanococcus vannielii</name>
    <dbReference type="NCBI Taxonomy" id="2187"/>
    <lineage>
        <taxon>Archaea</taxon>
        <taxon>Methanobacteriati</taxon>
        <taxon>Methanobacteriota</taxon>
        <taxon>Methanomada group</taxon>
        <taxon>Methanococci</taxon>
        <taxon>Methanococcales</taxon>
        <taxon>Methanococcaceae</taxon>
        <taxon>Methanococcus</taxon>
    </lineage>
</organism>
<comment type="function">
    <text evidence="1">Part of a complex that catalyzes the formation of methyl-coenzyme M and tetrahydromethanopterin from coenzyme M and methyl-tetrahydromethanopterin. This is an energy-conserving, sodium-ion translocating step.</text>
</comment>
<comment type="catalytic activity">
    <reaction>
        <text>5-methyl-5,6,7,8-tetrahydromethanopterin + coenzyme M + 2 Na(+)(in) = 5,6,7,8-tetrahydromethanopterin + methyl-coenzyme M + 2 Na(+)(out)</text>
        <dbReference type="Rhea" id="RHEA:53492"/>
        <dbReference type="ChEBI" id="CHEBI:29101"/>
        <dbReference type="ChEBI" id="CHEBI:58103"/>
        <dbReference type="ChEBI" id="CHEBI:58116"/>
        <dbReference type="ChEBI" id="CHEBI:58286"/>
        <dbReference type="ChEBI" id="CHEBI:58319"/>
        <dbReference type="EC" id="7.2.1.4"/>
    </reaction>
</comment>
<comment type="pathway">
    <text>One-carbon metabolism; methanogenesis from CO(2); methyl-coenzyme M from 5,10-methylene-5,6,7,8-tetrahydromethanopterin: step 2/2.</text>
</comment>
<comment type="subunit">
    <text evidence="1">The complex is composed of 8 subunits; MtrA, MtrB, MtrC, MtrD, MtrE, MtrF, MtrG and MtrH.</text>
</comment>
<comment type="subcellular location">
    <subcellularLocation>
        <location evidence="3">Cell membrane</location>
        <topology evidence="3">Multi-pass membrane protein</topology>
    </subcellularLocation>
</comment>
<comment type="similarity">
    <text evidence="3">Belongs to the MtrE family.</text>
</comment>
<sequence length="85" mass="8592">MDPTLISLGALALAGAAATVSGCAEDLESDVGSQSNPNSQVQLGPQMGNIHRYFNKAISGEPVSYGLYVAVAGSVAWALINAGLN</sequence>
<gene>
    <name type="primary">mtrE</name>
</gene>
<proteinExistence type="inferred from homology"/>
<dbReference type="EC" id="7.2.1.4"/>
<dbReference type="EMBL" id="U57339">
    <property type="protein sequence ID" value="AAB02005.1"/>
    <property type="molecule type" value="Genomic_DNA"/>
</dbReference>
<dbReference type="SMR" id="Q50830"/>
<dbReference type="UniPathway" id="UPA00640">
    <property type="reaction ID" value="UER00698"/>
</dbReference>
<dbReference type="GO" id="GO:0005737">
    <property type="term" value="C:cytoplasm"/>
    <property type="evidence" value="ECO:0007669"/>
    <property type="project" value="InterPro"/>
</dbReference>
<dbReference type="GO" id="GO:0005886">
    <property type="term" value="C:plasma membrane"/>
    <property type="evidence" value="ECO:0007669"/>
    <property type="project" value="UniProtKB-SubCell"/>
</dbReference>
<dbReference type="GO" id="GO:0012506">
    <property type="term" value="C:vesicle membrane"/>
    <property type="evidence" value="ECO:0007669"/>
    <property type="project" value="InterPro"/>
</dbReference>
<dbReference type="GO" id="GO:0030269">
    <property type="term" value="F:tetrahydromethanopterin S-methyltransferase activity"/>
    <property type="evidence" value="ECO:0007669"/>
    <property type="project" value="InterPro"/>
</dbReference>
<dbReference type="GO" id="GO:0019386">
    <property type="term" value="P:methanogenesis, from carbon dioxide"/>
    <property type="evidence" value="ECO:0007669"/>
    <property type="project" value="UniProtKB-UniPathway"/>
</dbReference>
<dbReference type="GO" id="GO:0032259">
    <property type="term" value="P:methylation"/>
    <property type="evidence" value="ECO:0007669"/>
    <property type="project" value="UniProtKB-KW"/>
</dbReference>
<dbReference type="GO" id="GO:0006730">
    <property type="term" value="P:one-carbon metabolic process"/>
    <property type="evidence" value="ECO:0007669"/>
    <property type="project" value="UniProtKB-KW"/>
</dbReference>
<dbReference type="InterPro" id="IPR005780">
    <property type="entry name" value="MeTrfase_E"/>
</dbReference>
<dbReference type="Pfam" id="PF04206">
    <property type="entry name" value="MtrE"/>
    <property type="match status" value="1"/>
</dbReference>
<feature type="chain" id="PRO_0000147545" description="Tetrahydromethanopterin S-methyltransferase subunit E">
    <location>
        <begin position="1"/>
        <end position="85" status="greater than"/>
    </location>
</feature>
<feature type="transmembrane region" description="Helical" evidence="2">
    <location>
        <begin position="4"/>
        <end position="24"/>
    </location>
</feature>
<feature type="transmembrane region" description="Helical" evidence="2">
    <location>
        <begin position="63"/>
        <end position="83"/>
    </location>
</feature>
<feature type="non-terminal residue">
    <location>
        <position position="85"/>
    </location>
</feature>
<evidence type="ECO:0000250" key="1"/>
<evidence type="ECO:0000255" key="2"/>
<evidence type="ECO:0000305" key="3"/>